<name>DAPA_SALTI</name>
<gene>
    <name evidence="1" type="primary">dapA</name>
    <name type="ordered locus">STY2727</name>
    <name type="ordered locus">t0370</name>
</gene>
<comment type="function">
    <text evidence="1">Catalyzes the condensation of (S)-aspartate-beta-semialdehyde [(S)-ASA] and pyruvate to 4-hydroxy-tetrahydrodipicolinate (HTPA).</text>
</comment>
<comment type="catalytic activity">
    <reaction evidence="1">
        <text>L-aspartate 4-semialdehyde + pyruvate = (2S,4S)-4-hydroxy-2,3,4,5-tetrahydrodipicolinate + H2O + H(+)</text>
        <dbReference type="Rhea" id="RHEA:34171"/>
        <dbReference type="ChEBI" id="CHEBI:15361"/>
        <dbReference type="ChEBI" id="CHEBI:15377"/>
        <dbReference type="ChEBI" id="CHEBI:15378"/>
        <dbReference type="ChEBI" id="CHEBI:67139"/>
        <dbReference type="ChEBI" id="CHEBI:537519"/>
        <dbReference type="EC" id="4.3.3.7"/>
    </reaction>
</comment>
<comment type="pathway">
    <text evidence="1">Amino-acid biosynthesis; L-lysine biosynthesis via DAP pathway; (S)-tetrahydrodipicolinate from L-aspartate: step 3/4.</text>
</comment>
<comment type="subunit">
    <text evidence="1">Homotetramer; dimer of dimers.</text>
</comment>
<comment type="subcellular location">
    <subcellularLocation>
        <location evidence="1">Cytoplasm</location>
    </subcellularLocation>
</comment>
<comment type="similarity">
    <text evidence="1">Belongs to the DapA family.</text>
</comment>
<comment type="caution">
    <text evidence="2">Was originally thought to be a dihydrodipicolinate synthase (DHDPS), catalyzing the condensation of (S)-aspartate-beta-semialdehyde [(S)-ASA] and pyruvate to dihydrodipicolinate (DHDP). However, it was shown in E.coli that the product of the enzymatic reaction is not dihydrodipicolinate but in fact (4S)-4-hydroxy-2,3,4,5-tetrahydro-(2S)-dipicolinic acid (HTPA), and that the consecutive dehydration reaction leading to DHDP is not spontaneous but catalyzed by DapB.</text>
</comment>
<organism>
    <name type="scientific">Salmonella typhi</name>
    <dbReference type="NCBI Taxonomy" id="90370"/>
    <lineage>
        <taxon>Bacteria</taxon>
        <taxon>Pseudomonadati</taxon>
        <taxon>Pseudomonadota</taxon>
        <taxon>Gammaproteobacteria</taxon>
        <taxon>Enterobacterales</taxon>
        <taxon>Enterobacteriaceae</taxon>
        <taxon>Salmonella</taxon>
    </lineage>
</organism>
<accession>Q8Z4R8</accession>
<feature type="chain" id="PRO_0000103149" description="4-hydroxy-tetrahydrodipicolinate synthase">
    <location>
        <begin position="1"/>
        <end position="292"/>
    </location>
</feature>
<feature type="active site" description="Proton donor/acceptor" evidence="1">
    <location>
        <position position="133"/>
    </location>
</feature>
<feature type="active site" description="Schiff-base intermediate with substrate" evidence="1">
    <location>
        <position position="161"/>
    </location>
</feature>
<feature type="binding site" evidence="1">
    <location>
        <position position="45"/>
    </location>
    <ligand>
        <name>pyruvate</name>
        <dbReference type="ChEBI" id="CHEBI:15361"/>
    </ligand>
</feature>
<feature type="binding site" evidence="1">
    <location>
        <position position="203"/>
    </location>
    <ligand>
        <name>pyruvate</name>
        <dbReference type="ChEBI" id="CHEBI:15361"/>
    </ligand>
</feature>
<feature type="site" description="Part of a proton relay during catalysis" evidence="1">
    <location>
        <position position="44"/>
    </location>
</feature>
<feature type="site" description="Part of a proton relay during catalysis" evidence="1">
    <location>
        <position position="107"/>
    </location>
</feature>
<reference key="1">
    <citation type="journal article" date="2001" name="Nature">
        <title>Complete genome sequence of a multiple drug resistant Salmonella enterica serovar Typhi CT18.</title>
        <authorList>
            <person name="Parkhill J."/>
            <person name="Dougan G."/>
            <person name="James K.D."/>
            <person name="Thomson N.R."/>
            <person name="Pickard D."/>
            <person name="Wain J."/>
            <person name="Churcher C.M."/>
            <person name="Mungall K.L."/>
            <person name="Bentley S.D."/>
            <person name="Holden M.T.G."/>
            <person name="Sebaihia M."/>
            <person name="Baker S."/>
            <person name="Basham D."/>
            <person name="Brooks K."/>
            <person name="Chillingworth T."/>
            <person name="Connerton P."/>
            <person name="Cronin A."/>
            <person name="Davis P."/>
            <person name="Davies R.M."/>
            <person name="Dowd L."/>
            <person name="White N."/>
            <person name="Farrar J."/>
            <person name="Feltwell T."/>
            <person name="Hamlin N."/>
            <person name="Haque A."/>
            <person name="Hien T.T."/>
            <person name="Holroyd S."/>
            <person name="Jagels K."/>
            <person name="Krogh A."/>
            <person name="Larsen T.S."/>
            <person name="Leather S."/>
            <person name="Moule S."/>
            <person name="O'Gaora P."/>
            <person name="Parry C."/>
            <person name="Quail M.A."/>
            <person name="Rutherford K.M."/>
            <person name="Simmonds M."/>
            <person name="Skelton J."/>
            <person name="Stevens K."/>
            <person name="Whitehead S."/>
            <person name="Barrell B.G."/>
        </authorList>
    </citation>
    <scope>NUCLEOTIDE SEQUENCE [LARGE SCALE GENOMIC DNA]</scope>
    <source>
        <strain>CT18</strain>
    </source>
</reference>
<reference key="2">
    <citation type="journal article" date="2003" name="J. Bacteriol.">
        <title>Comparative genomics of Salmonella enterica serovar Typhi strains Ty2 and CT18.</title>
        <authorList>
            <person name="Deng W."/>
            <person name="Liou S.-R."/>
            <person name="Plunkett G. III"/>
            <person name="Mayhew G.F."/>
            <person name="Rose D.J."/>
            <person name="Burland V."/>
            <person name="Kodoyianni V."/>
            <person name="Schwartz D.C."/>
            <person name="Blattner F.R."/>
        </authorList>
    </citation>
    <scope>NUCLEOTIDE SEQUENCE [LARGE SCALE GENOMIC DNA]</scope>
    <source>
        <strain>ATCC 700931 / Ty2</strain>
    </source>
</reference>
<protein>
    <recommendedName>
        <fullName evidence="1">4-hydroxy-tetrahydrodipicolinate synthase</fullName>
        <shortName evidence="1">HTPA synthase</shortName>
        <ecNumber evidence="1">4.3.3.7</ecNumber>
    </recommendedName>
</protein>
<keyword id="KW-0028">Amino-acid biosynthesis</keyword>
<keyword id="KW-0963">Cytoplasm</keyword>
<keyword id="KW-0220">Diaminopimelate biosynthesis</keyword>
<keyword id="KW-0456">Lyase</keyword>
<keyword id="KW-0457">Lysine biosynthesis</keyword>
<keyword id="KW-0704">Schiff base</keyword>
<sequence length="292" mass="31280">MFTGSIVALVTPMDEKGNVSRSCLKKLIDYHVANGTSAIVSVGTTGESATLSHDEHGDVVMMTLELADGRIPVIAGTGANATAEAISLTQRFNDSGIVGCLTVTPYYNRPTQEGLFQHFKAIAEHTDLPQILYNVPSRTGCDMLPETVGRLAEIKNIIAIKEATGNLTRVHQIKELVSDDFILLSGDDASALDFMQLGGHGVISVTANVAARDMADMCKLAAEGQFAEARAINQRLMPLHNKLFVEPNPIPVKWACKALGLVATDTLRLPMTPITDHGRDIVKAALQHAGLL</sequence>
<proteinExistence type="inferred from homology"/>
<evidence type="ECO:0000255" key="1">
    <source>
        <dbReference type="HAMAP-Rule" id="MF_00418"/>
    </source>
</evidence>
<evidence type="ECO:0000305" key="2"/>
<dbReference type="EC" id="4.3.3.7" evidence="1"/>
<dbReference type="EMBL" id="AL513382">
    <property type="protein sequence ID" value="CAD02689.1"/>
    <property type="molecule type" value="Genomic_DNA"/>
</dbReference>
<dbReference type="EMBL" id="AE014613">
    <property type="protein sequence ID" value="AAO68088.1"/>
    <property type="molecule type" value="Genomic_DNA"/>
</dbReference>
<dbReference type="RefSeq" id="NP_457023.1">
    <property type="nucleotide sequence ID" value="NC_003198.1"/>
</dbReference>
<dbReference type="RefSeq" id="WP_000494019.1">
    <property type="nucleotide sequence ID" value="NZ_WSUR01000007.1"/>
</dbReference>
<dbReference type="SMR" id="Q8Z4R8"/>
<dbReference type="STRING" id="220341.gene:17586623"/>
<dbReference type="KEGG" id="stt:t0370"/>
<dbReference type="KEGG" id="sty:STY2727"/>
<dbReference type="PATRIC" id="fig|220341.7.peg.2765"/>
<dbReference type="eggNOG" id="COG0329">
    <property type="taxonomic scope" value="Bacteria"/>
</dbReference>
<dbReference type="HOGENOM" id="CLU_049343_7_1_6"/>
<dbReference type="OMA" id="GMDACVP"/>
<dbReference type="OrthoDB" id="9782828at2"/>
<dbReference type="UniPathway" id="UPA00034">
    <property type="reaction ID" value="UER00017"/>
</dbReference>
<dbReference type="Proteomes" id="UP000000541">
    <property type="component" value="Chromosome"/>
</dbReference>
<dbReference type="Proteomes" id="UP000002670">
    <property type="component" value="Chromosome"/>
</dbReference>
<dbReference type="GO" id="GO:0005829">
    <property type="term" value="C:cytosol"/>
    <property type="evidence" value="ECO:0007669"/>
    <property type="project" value="TreeGrafter"/>
</dbReference>
<dbReference type="GO" id="GO:0008840">
    <property type="term" value="F:4-hydroxy-tetrahydrodipicolinate synthase activity"/>
    <property type="evidence" value="ECO:0007669"/>
    <property type="project" value="UniProtKB-UniRule"/>
</dbReference>
<dbReference type="GO" id="GO:0019877">
    <property type="term" value="P:diaminopimelate biosynthetic process"/>
    <property type="evidence" value="ECO:0007669"/>
    <property type="project" value="UniProtKB-UniRule"/>
</dbReference>
<dbReference type="GO" id="GO:0009089">
    <property type="term" value="P:lysine biosynthetic process via diaminopimelate"/>
    <property type="evidence" value="ECO:0007669"/>
    <property type="project" value="UniProtKB-UniRule"/>
</dbReference>
<dbReference type="CDD" id="cd00950">
    <property type="entry name" value="DHDPS"/>
    <property type="match status" value="1"/>
</dbReference>
<dbReference type="FunFam" id="3.20.20.70:FF:000046">
    <property type="entry name" value="4-hydroxy-tetrahydrodipicolinate synthase"/>
    <property type="match status" value="1"/>
</dbReference>
<dbReference type="Gene3D" id="3.20.20.70">
    <property type="entry name" value="Aldolase class I"/>
    <property type="match status" value="1"/>
</dbReference>
<dbReference type="HAMAP" id="MF_00418">
    <property type="entry name" value="DapA"/>
    <property type="match status" value="1"/>
</dbReference>
<dbReference type="InterPro" id="IPR013785">
    <property type="entry name" value="Aldolase_TIM"/>
</dbReference>
<dbReference type="InterPro" id="IPR005263">
    <property type="entry name" value="DapA"/>
</dbReference>
<dbReference type="InterPro" id="IPR002220">
    <property type="entry name" value="DapA-like"/>
</dbReference>
<dbReference type="InterPro" id="IPR020625">
    <property type="entry name" value="Schiff_base-form_aldolases_AS"/>
</dbReference>
<dbReference type="InterPro" id="IPR020624">
    <property type="entry name" value="Schiff_base-form_aldolases_CS"/>
</dbReference>
<dbReference type="NCBIfam" id="TIGR00674">
    <property type="entry name" value="dapA"/>
    <property type="match status" value="1"/>
</dbReference>
<dbReference type="PANTHER" id="PTHR12128:SF66">
    <property type="entry name" value="4-HYDROXY-2-OXOGLUTARATE ALDOLASE, MITOCHONDRIAL"/>
    <property type="match status" value="1"/>
</dbReference>
<dbReference type="PANTHER" id="PTHR12128">
    <property type="entry name" value="DIHYDRODIPICOLINATE SYNTHASE"/>
    <property type="match status" value="1"/>
</dbReference>
<dbReference type="Pfam" id="PF00701">
    <property type="entry name" value="DHDPS"/>
    <property type="match status" value="1"/>
</dbReference>
<dbReference type="PIRSF" id="PIRSF001365">
    <property type="entry name" value="DHDPS"/>
    <property type="match status" value="1"/>
</dbReference>
<dbReference type="PRINTS" id="PR00146">
    <property type="entry name" value="DHPICSNTHASE"/>
</dbReference>
<dbReference type="SMART" id="SM01130">
    <property type="entry name" value="DHDPS"/>
    <property type="match status" value="1"/>
</dbReference>
<dbReference type="SUPFAM" id="SSF51569">
    <property type="entry name" value="Aldolase"/>
    <property type="match status" value="1"/>
</dbReference>
<dbReference type="PROSITE" id="PS00665">
    <property type="entry name" value="DHDPS_1"/>
    <property type="match status" value="1"/>
</dbReference>
<dbReference type="PROSITE" id="PS00666">
    <property type="entry name" value="DHDPS_2"/>
    <property type="match status" value="1"/>
</dbReference>